<organism>
    <name type="scientific">Botryotinia fuckeliana</name>
    <name type="common">Noble rot fungus</name>
    <name type="synonym">Botrytis cinerea</name>
    <dbReference type="NCBI Taxonomy" id="40559"/>
    <lineage>
        <taxon>Eukaryota</taxon>
        <taxon>Fungi</taxon>
        <taxon>Dikarya</taxon>
        <taxon>Ascomycota</taxon>
        <taxon>Pezizomycotina</taxon>
        <taxon>Leotiomycetes</taxon>
        <taxon>Helotiales</taxon>
        <taxon>Sclerotiniaceae</taxon>
        <taxon>Botrytis</taxon>
    </lineage>
</organism>
<accession>B2RML6</accession>
<name>BOT4_BOTFU</name>
<comment type="function">
    <text evidence="4 5 6 7 8 9 10">Cytochrome P450 monooxygenase; part of the gene cluster that mediates the biosynthesis of botrydial (PubMed:14651630, PubMed:19476353, PubMed:27529428). Botrydial is necessary for colonization of plant tissue by the T4 strain (PubMed:19035644). It is a strain-dependent virulence factor since highly aggressive strains like SAS56 or B05 still retain substantial virulence when botrydial synthesis is impaired, since they produce also botcinic acid (PubMed:15986930). The first step of botrydial biosynthesis is performed by the sesquiterpene synthase BOT2 which catalyzes the cyclization of farnesyl diphosphate (FPP) to presilphiperfolan-8-beta-ol (PSP) (PubMed:19035644, PubMed:19476353). The cytochrome P450 monooxygenase BOT4 then catalyzes the hydroxylation at C-4 to give a probotryane intermediate (PubMed:27529428, PubMed:28617493). Acetylation of the hydroxyl at C-4 is carried out by the acetyltransferase BOT5, followed by the combined action of the P450 monooxygenases BOT3 and BOT1, to yield finally the glycol, via the regio- and stereospecific hydroxylations at C-10 and C-15 of the probotryane intermediates, respectively (PubMed:15986930, PubMed:27529428). The cleavage of the C10-C15 bond of probotryane skeleton is an intriguing and chemically important reaction, which could be mediated by some of the monooxygenases or by a combination of them (PubMed:27529428). It is possible that either BOT3 or BOT1 would oxidize either the 10- or the 15-hydroxy group to the hydroperoxide derivative, which would then undergo heterolytic fragmentation to give the dialdehyde botrydial (PubMed:27529428). Finally, the dehydrogenase BOT7 might be involved in the conversion of botrydial to dihydrobotrydial (PubMed:27721016).</text>
</comment>
<comment type="cofactor">
    <cofactor evidence="1">
        <name>heme</name>
        <dbReference type="ChEBI" id="CHEBI:30413"/>
    </cofactor>
</comment>
<comment type="pathway">
    <text evidence="8 10">Secondary metabolite biosynthesis.</text>
</comment>
<comment type="subcellular location">
    <subcellularLocation>
        <location evidence="2">Membrane</location>
        <topology evidence="2">Single-pass membrane protein</topology>
    </subcellularLocation>
</comment>
<comment type="induction">
    <text evidence="6 9">The botrydial biosynthesis cluster genes are co-regulated by the Ca(2+)/calcineurin signal transduction pathway, which is under the control of the alpha subunit BCG1 of a heterotrimeric G protein (PubMed:19035644). Expression of the cluster is also positively regulated by the cluster-specific transcription factor BOT6 (PubMed:27721016).</text>
</comment>
<comment type="disruption phenotype">
    <text evidence="8">Abolishes the production of botrydial and accumulates 5-hydroxy-7-(oct-2-enoyl)botrylactone, 6-beta-hydroxy-7-deoxybo-trylactone, cinbotolide B, and cinbotolide C (PubMed:27529428).</text>
</comment>
<comment type="similarity">
    <text evidence="12">Belongs to the cytochrome P450 family.</text>
</comment>
<reference key="1">
    <citation type="journal article" date="2003" name="Mol. Microbiol.">
        <title>Cyclophilin A and calcineurin functions investigated by gene inactivation, cyclosporin A inhibition and cDNA arrays approaches in the phytopathogenic fungus Botrytis cinerea.</title>
        <authorList>
            <person name="Viaud M."/>
            <person name="Brunet-Simon A."/>
            <person name="Brygoo Y."/>
            <person name="Pradier J.-M."/>
            <person name="Levis C."/>
        </authorList>
    </citation>
    <scope>NUCLEOTIDE SEQUENCE [GENOMIC DNA]</scope>
    <source>
        <strain>T4</strain>
    </source>
</reference>
<reference key="2">
    <citation type="journal article" date="2005" name="Mol. Plant Microbe Interact.">
        <title>Functional analysis of the cytochrome P450 monooxygenase gene bcbot1 of Botrytis cinerea indicates that botrydial is a strain-specific virulence factor.</title>
        <authorList>
            <person name="Siewers V."/>
            <person name="Viaud M."/>
            <person name="Jimenez-Teja D."/>
            <person name="Collado I.G."/>
            <person name="Gronover C.S."/>
            <person name="Pradier J.M."/>
            <person name="Tudzynski B."/>
            <person name="Tudzynski P."/>
        </authorList>
    </citation>
    <scope>FUNCTION</scope>
</reference>
<reference key="3">
    <citation type="journal article" date="2008" name="ACS Chem. Biol.">
        <title>Sesquiterpene synthase from the botrydial biosynthetic gene cluster of the phytopathogen Botrytis cinerea.</title>
        <authorList>
            <person name="Pinedo C."/>
            <person name="Wang C.M."/>
            <person name="Pradier J.M."/>
            <person name="Dalmais B."/>
            <person name="Choquer M."/>
            <person name="Le Pecheur P."/>
            <person name="Morgant G."/>
            <person name="Collado I.G."/>
            <person name="Cane D.E."/>
            <person name="Viaud M."/>
        </authorList>
    </citation>
    <scope>FUNCTION</scope>
    <scope>INDUCTION</scope>
</reference>
<reference key="4">
    <citation type="journal article" date="2009" name="J. Am. Chem. Soc.">
        <title>Biosynthesis of the sesquiterpene botrydial in Botrytis cinerea. Mechanism and stereochemistry of the enzymatic formation of presilphiperfolan-8beta-ol.</title>
        <authorList>
            <person name="Wang C.M."/>
            <person name="Hopsn R."/>
            <person name="Lin X."/>
            <person name="Cane D.E."/>
        </authorList>
    </citation>
    <scope>FUNCTION</scope>
</reference>
<reference key="5">
    <citation type="journal article" date="2016" name="ACS Chem. Biol.">
        <title>Genetic and molecular basis of botrydial biosynthesis: connecting cytochrome P450-encoding genes to biosynthetic intermediates.</title>
        <authorList>
            <person name="Moraga J."/>
            <person name="Dalmais B."/>
            <person name="Izquierdo-Bueno I."/>
            <person name="Aleu J."/>
            <person name="Hanson J.R."/>
            <person name="Hernandez-Galan R."/>
            <person name="Viaud M."/>
            <person name="Collado I.G."/>
        </authorList>
    </citation>
    <scope>FUNCTION</scope>
    <scope>DISRUPTION PHENOTYPE</scope>
    <scope>CATALYTIC ACTIVITY</scope>
    <scope>PATHWAY</scope>
</reference>
<reference key="6">
    <citation type="journal article" date="2016" name="Fungal Genet. Biol.">
        <title>The botrydial biosynthetic gene cluster of Botrytis cinerea displays a bipartite genomic structure and is positively regulated by the putative Zn(II)2Cys6 transcription factor BcBot6.</title>
        <authorList>
            <person name="Porquier A."/>
            <person name="Morgant G."/>
            <person name="Moraga J."/>
            <person name="Dalmais B."/>
            <person name="Luyten I."/>
            <person name="Simon A."/>
            <person name="Pradier J.M."/>
            <person name="Amselem J."/>
            <person name="Collado I.G."/>
            <person name="Viaud M."/>
        </authorList>
    </citation>
    <scope>FUNCTION</scope>
    <scope>INDUCTION</scope>
</reference>
<reference key="7">
    <citation type="journal article" date="2017" name="Org. Biomol. Chem.">
        <title>The formation of sesquiterpenoid presilphiperfolane and cameroonane metabolites in the Bcbot4 null mutant of Botrytis cinerea.</title>
        <authorList>
            <person name="Franco Dos Santos G."/>
            <person name="Moraga J."/>
            <person name="Takahashi J.A."/>
            <person name="Viaud M."/>
            <person name="Hanson J.R."/>
            <person name="Hernandez Galan R."/>
            <person name="Collado I.G."/>
        </authorList>
    </citation>
    <scope>FUNCTION</scope>
    <scope>CATALYTIC ACTIVITY</scope>
    <scope>PATHWAY</scope>
</reference>
<keyword id="KW-0325">Glycoprotein</keyword>
<keyword id="KW-0349">Heme</keyword>
<keyword id="KW-0408">Iron</keyword>
<keyword id="KW-0472">Membrane</keyword>
<keyword id="KW-0479">Metal-binding</keyword>
<keyword id="KW-0503">Monooxygenase</keyword>
<keyword id="KW-0560">Oxidoreductase</keyword>
<keyword id="KW-0812">Transmembrane</keyword>
<keyword id="KW-1133">Transmembrane helix</keyword>
<keyword id="KW-0843">Virulence</keyword>
<evidence type="ECO:0000250" key="1">
    <source>
        <dbReference type="UniProtKB" id="P04798"/>
    </source>
</evidence>
<evidence type="ECO:0000255" key="2"/>
<evidence type="ECO:0000255" key="3">
    <source>
        <dbReference type="PROSITE-ProRule" id="PRU00498"/>
    </source>
</evidence>
<evidence type="ECO:0000269" key="4">
    <source>
    </source>
</evidence>
<evidence type="ECO:0000269" key="5">
    <source>
    </source>
</evidence>
<evidence type="ECO:0000269" key="6">
    <source>
    </source>
</evidence>
<evidence type="ECO:0000269" key="7">
    <source>
    </source>
</evidence>
<evidence type="ECO:0000269" key="8">
    <source>
    </source>
</evidence>
<evidence type="ECO:0000269" key="9">
    <source>
    </source>
</evidence>
<evidence type="ECO:0000269" key="10">
    <source>
    </source>
</evidence>
<evidence type="ECO:0000303" key="11">
    <source>
    </source>
</evidence>
<evidence type="ECO:0000305" key="12"/>
<dbReference type="EC" id="1.-.-.-" evidence="8 10"/>
<dbReference type="EMBL" id="AY277723">
    <property type="protein sequence ID" value="ACD65513.1"/>
    <property type="molecule type" value="Genomic_DNA"/>
</dbReference>
<dbReference type="SMR" id="B2RML6"/>
<dbReference type="GlyCosmos" id="B2RML6">
    <property type="glycosylation" value="3 sites, No reported glycans"/>
</dbReference>
<dbReference type="GO" id="GO:0016020">
    <property type="term" value="C:membrane"/>
    <property type="evidence" value="ECO:0007669"/>
    <property type="project" value="UniProtKB-SubCell"/>
</dbReference>
<dbReference type="GO" id="GO:0020037">
    <property type="term" value="F:heme binding"/>
    <property type="evidence" value="ECO:0007669"/>
    <property type="project" value="InterPro"/>
</dbReference>
<dbReference type="GO" id="GO:0005506">
    <property type="term" value="F:iron ion binding"/>
    <property type="evidence" value="ECO:0007669"/>
    <property type="project" value="InterPro"/>
</dbReference>
<dbReference type="GO" id="GO:0004497">
    <property type="term" value="F:monooxygenase activity"/>
    <property type="evidence" value="ECO:0007669"/>
    <property type="project" value="UniProtKB-KW"/>
</dbReference>
<dbReference type="GO" id="GO:0016705">
    <property type="term" value="F:oxidoreductase activity, acting on paired donors, with incorporation or reduction of molecular oxygen"/>
    <property type="evidence" value="ECO:0007669"/>
    <property type="project" value="InterPro"/>
</dbReference>
<dbReference type="GO" id="GO:0009058">
    <property type="term" value="P:biosynthetic process"/>
    <property type="evidence" value="ECO:0007669"/>
    <property type="project" value="UniProtKB-ARBA"/>
</dbReference>
<dbReference type="CDD" id="cd11058">
    <property type="entry name" value="CYP60B-like"/>
    <property type="match status" value="1"/>
</dbReference>
<dbReference type="FunFam" id="1.10.630.10:FF:000158">
    <property type="entry name" value="Cytochrome P450, putative (Eurofung)"/>
    <property type="match status" value="1"/>
</dbReference>
<dbReference type="Gene3D" id="1.10.630.10">
    <property type="entry name" value="Cytochrome P450"/>
    <property type="match status" value="1"/>
</dbReference>
<dbReference type="InterPro" id="IPR001128">
    <property type="entry name" value="Cyt_P450"/>
</dbReference>
<dbReference type="InterPro" id="IPR002401">
    <property type="entry name" value="Cyt_P450_E_grp-I"/>
</dbReference>
<dbReference type="InterPro" id="IPR036396">
    <property type="entry name" value="Cyt_P450_sf"/>
</dbReference>
<dbReference type="InterPro" id="IPR050121">
    <property type="entry name" value="Cytochrome_P450_monoxygenase"/>
</dbReference>
<dbReference type="PANTHER" id="PTHR24305">
    <property type="entry name" value="CYTOCHROME P450"/>
    <property type="match status" value="1"/>
</dbReference>
<dbReference type="PANTHER" id="PTHR24305:SF210">
    <property type="entry name" value="CYTOCHROME P450 MONOOXYGENASE ASQL-RELATED"/>
    <property type="match status" value="1"/>
</dbReference>
<dbReference type="Pfam" id="PF00067">
    <property type="entry name" value="p450"/>
    <property type="match status" value="1"/>
</dbReference>
<dbReference type="PRINTS" id="PR00463">
    <property type="entry name" value="EP450I"/>
</dbReference>
<dbReference type="PRINTS" id="PR00385">
    <property type="entry name" value="P450"/>
</dbReference>
<dbReference type="SUPFAM" id="SSF48264">
    <property type="entry name" value="Cytochrome P450"/>
    <property type="match status" value="1"/>
</dbReference>
<feature type="chain" id="PRO_0000444644" description="Cytochrome P450 monooxygenase BOT4">
    <location>
        <begin position="1"/>
        <end position="526"/>
    </location>
</feature>
<feature type="transmembrane region" description="Helical" evidence="2">
    <location>
        <begin position="41"/>
        <end position="61"/>
    </location>
</feature>
<feature type="binding site" description="axial binding residue" evidence="1">
    <location>
        <position position="464"/>
    </location>
    <ligand>
        <name>heme</name>
        <dbReference type="ChEBI" id="CHEBI:30413"/>
    </ligand>
    <ligandPart>
        <name>Fe</name>
        <dbReference type="ChEBI" id="CHEBI:18248"/>
    </ligandPart>
</feature>
<feature type="glycosylation site" description="N-linked (GlcNAc...) asparagine" evidence="3">
    <location>
        <position position="5"/>
    </location>
</feature>
<feature type="glycosylation site" description="N-linked (GlcNAc...) asparagine" evidence="3">
    <location>
        <position position="205"/>
    </location>
</feature>
<feature type="glycosylation site" description="N-linked (GlcNAc...) asparagine" evidence="3">
    <location>
        <position position="281"/>
    </location>
</feature>
<sequence length="526" mass="59260">MVEYNVTSTTLEPKTGWPVVDRLLGGYTELETLNGQVVARCLVAIILCRFIAVWSYNLWFHPLARFPGPFLGRCSLLYRFIHSSRGRIHSAVADAHKKYGDIVRIAPNELSFASVESWKAIYGHPTRGNEIAPKGPFYEVFAAGFNSKCVGSERNPEKHALMRKMLNPAFSQRGLLEQEEIISGTIDKFVHVLGEKAGPGTKGLNMTKWYEMNSFDILGEMAFGESFHSLDTGIPHFWADVVLEHLYIITLLDNLRRIGWLAKLAGLLIPASLVTKNQNSNYSRQQVEKRLGIQKSRNDFVSLLVDKVRAGEVSKEEMTAHVSTITIAGGETVATTLSGLTCFLAQNPDKLERLTKEIRAAFKTFEEINAVKSQQIPYLQAVINEGLRLFPPASGGAPRVSPGFTLHDKYIPKGTEVNVSPWSITHNAKYFSDPWEFKPERWLDPNSKDIKDASRPFLLGPRDCLGRNFALMELNLVLAKLLWSYDMELVNKEINFLEQSTVHVLWWKPGLFVRWHKPQSPGFSPS</sequence>
<proteinExistence type="evidence at protein level"/>
<protein>
    <recommendedName>
        <fullName evidence="11">Cytochrome P450 monooxygenase BOT4</fullName>
        <ecNumber evidence="8 10">1.-.-.-</ecNumber>
    </recommendedName>
    <alternativeName>
        <fullName evidence="11">Botrydial biosynthesis cluster protein 4</fullName>
    </alternativeName>
</protein>
<gene>
    <name evidence="11" type="primary">BOT4</name>
    <name type="synonym">BCL4</name>
</gene>